<protein>
    <recommendedName>
        <fullName>Cytochrome c oxidase subunit 1</fullName>
        <ecNumber>7.1.1.9</ecNumber>
    </recommendedName>
    <alternativeName>
        <fullName>Cytochrome BB(3) subunit 1</fullName>
    </alternativeName>
    <alternativeName>
        <fullName>Cytochrome c oxidase polypeptide I</fullName>
    </alternativeName>
</protein>
<keyword id="KW-1003">Cell membrane</keyword>
<keyword id="KW-0186">Copper</keyword>
<keyword id="KW-0249">Electron transport</keyword>
<keyword id="KW-0349">Heme</keyword>
<keyword id="KW-0375">Hydrogen ion transport</keyword>
<keyword id="KW-0406">Ion transport</keyword>
<keyword id="KW-0408">Iron</keyword>
<keyword id="KW-0472">Membrane</keyword>
<keyword id="KW-0479">Metal-binding</keyword>
<keyword id="KW-0679">Respiratory chain</keyword>
<keyword id="KW-1278">Translocase</keyword>
<keyword id="KW-0812">Transmembrane</keyword>
<keyword id="KW-1133">Transmembrane helix</keyword>
<keyword id="KW-0813">Transport</keyword>
<dbReference type="EC" id="7.1.1.9"/>
<dbReference type="EMBL" id="X80134">
    <property type="protein sequence ID" value="CAA56433.1"/>
    <property type="molecule type" value="Genomic_DNA"/>
</dbReference>
<dbReference type="PIR" id="S65858">
    <property type="entry name" value="S49345"/>
</dbReference>
<dbReference type="RefSeq" id="WP_055212924.1">
    <property type="nucleotide sequence ID" value="NZ_CP061202.1"/>
</dbReference>
<dbReference type="SMR" id="P98059"/>
<dbReference type="OrthoDB" id="9806838at2"/>
<dbReference type="UniPathway" id="UPA00705"/>
<dbReference type="GO" id="GO:0005886">
    <property type="term" value="C:plasma membrane"/>
    <property type="evidence" value="ECO:0007669"/>
    <property type="project" value="UniProtKB-SubCell"/>
</dbReference>
<dbReference type="GO" id="GO:0004129">
    <property type="term" value="F:cytochrome-c oxidase activity"/>
    <property type="evidence" value="ECO:0007669"/>
    <property type="project" value="UniProtKB-EC"/>
</dbReference>
<dbReference type="GO" id="GO:0020037">
    <property type="term" value="F:heme binding"/>
    <property type="evidence" value="ECO:0007669"/>
    <property type="project" value="InterPro"/>
</dbReference>
<dbReference type="GO" id="GO:0046872">
    <property type="term" value="F:metal ion binding"/>
    <property type="evidence" value="ECO:0007669"/>
    <property type="project" value="UniProtKB-KW"/>
</dbReference>
<dbReference type="GO" id="GO:0015990">
    <property type="term" value="P:electron transport coupled proton transport"/>
    <property type="evidence" value="ECO:0007669"/>
    <property type="project" value="TreeGrafter"/>
</dbReference>
<dbReference type="GO" id="GO:0006119">
    <property type="term" value="P:oxidative phosphorylation"/>
    <property type="evidence" value="ECO:0007669"/>
    <property type="project" value="UniProtKB-UniPathway"/>
</dbReference>
<dbReference type="GO" id="GO:0022904">
    <property type="term" value="P:respiratory electron transport chain"/>
    <property type="evidence" value="ECO:0007669"/>
    <property type="project" value="TreeGrafter"/>
</dbReference>
<dbReference type="CDD" id="cd01661">
    <property type="entry name" value="cbb3_Oxidase_I"/>
    <property type="match status" value="1"/>
</dbReference>
<dbReference type="FunFam" id="1.20.210.10:FF:000005">
    <property type="entry name" value="Cytochrome c oxidase, cbb3-type, subunit I"/>
    <property type="match status" value="1"/>
</dbReference>
<dbReference type="Gene3D" id="1.20.210.10">
    <property type="entry name" value="Cytochrome c oxidase-like, subunit I domain"/>
    <property type="match status" value="1"/>
</dbReference>
<dbReference type="InterPro" id="IPR023616">
    <property type="entry name" value="Cyt_c_oxase-like_su1_dom"/>
</dbReference>
<dbReference type="InterPro" id="IPR036927">
    <property type="entry name" value="Cyt_c_oxase-like_su1_sf"/>
</dbReference>
<dbReference type="InterPro" id="IPR000883">
    <property type="entry name" value="Cyt_C_Oxase_1"/>
</dbReference>
<dbReference type="InterPro" id="IPR023615">
    <property type="entry name" value="Cyt_c_Oxase_su1_BS"/>
</dbReference>
<dbReference type="InterPro" id="IPR004677">
    <property type="entry name" value="Cyt_c_oxidase_cbb3_su1"/>
</dbReference>
<dbReference type="NCBIfam" id="TIGR00780">
    <property type="entry name" value="ccoN"/>
    <property type="match status" value="1"/>
</dbReference>
<dbReference type="PANTHER" id="PTHR10422">
    <property type="entry name" value="CYTOCHROME C OXIDASE SUBUNIT 1"/>
    <property type="match status" value="1"/>
</dbReference>
<dbReference type="PANTHER" id="PTHR10422:SF29">
    <property type="entry name" value="CYTOCHROME C OXIDASE SUBUNIT 1 HOMOLOG, BACTEROID"/>
    <property type="match status" value="1"/>
</dbReference>
<dbReference type="Pfam" id="PF00115">
    <property type="entry name" value="COX1"/>
    <property type="match status" value="1"/>
</dbReference>
<dbReference type="SUPFAM" id="SSF81442">
    <property type="entry name" value="Cytochrome c oxidase subunit I-like"/>
    <property type="match status" value="1"/>
</dbReference>
<dbReference type="PROSITE" id="PS50855">
    <property type="entry name" value="COX1"/>
    <property type="match status" value="1"/>
</dbReference>
<dbReference type="PROSITE" id="PS00077">
    <property type="entry name" value="COX1_CUB"/>
    <property type="match status" value="1"/>
</dbReference>
<gene>
    <name type="primary">ctaD</name>
    <name type="synonym">ccoN</name>
</gene>
<evidence type="ECO:0000250" key="1">
    <source>
        <dbReference type="UniProtKB" id="D9IA43"/>
    </source>
</evidence>
<evidence type="ECO:0000255" key="2"/>
<evidence type="ECO:0000305" key="3"/>
<feature type="chain" id="PRO_0000183458" description="Cytochrome c oxidase subunit 1">
    <location>
        <begin position="1"/>
        <end position="532"/>
    </location>
</feature>
<feature type="transmembrane region" description="Helical" evidence="2">
    <location>
        <begin position="1"/>
        <end position="21"/>
    </location>
</feature>
<feature type="transmembrane region" description="Helical" evidence="2">
    <location>
        <begin position="27"/>
        <end position="47"/>
    </location>
</feature>
<feature type="transmembrane region" description="Helical" evidence="2">
    <location>
        <begin position="69"/>
        <end position="89"/>
    </location>
</feature>
<feature type="transmembrane region" description="Helical" evidence="2">
    <location>
        <begin position="115"/>
        <end position="135"/>
    </location>
</feature>
<feature type="transmembrane region" description="Helical" evidence="2">
    <location>
        <begin position="143"/>
        <end position="163"/>
    </location>
</feature>
<feature type="transmembrane region" description="Helical" evidence="2">
    <location>
        <begin position="185"/>
        <end position="205"/>
    </location>
</feature>
<feature type="transmembrane region" description="Helical" evidence="2">
    <location>
        <begin position="212"/>
        <end position="232"/>
    </location>
</feature>
<feature type="transmembrane region" description="Helical" evidence="2">
    <location>
        <begin position="263"/>
        <end position="283"/>
    </location>
</feature>
<feature type="transmembrane region" description="Helical" evidence="2">
    <location>
        <begin position="296"/>
        <end position="316"/>
    </location>
</feature>
<feature type="transmembrane region" description="Helical" evidence="2">
    <location>
        <begin position="328"/>
        <end position="348"/>
    </location>
</feature>
<feature type="transmembrane region" description="Helical" evidence="2">
    <location>
        <begin position="366"/>
        <end position="386"/>
    </location>
</feature>
<feature type="transmembrane region" description="Helical" evidence="2">
    <location>
        <begin position="403"/>
        <end position="423"/>
    </location>
</feature>
<feature type="transmembrane region" description="Helical" evidence="2">
    <location>
        <begin position="442"/>
        <end position="462"/>
    </location>
</feature>
<feature type="transmembrane region" description="Helical" evidence="2">
    <location>
        <begin position="496"/>
        <end position="516"/>
    </location>
</feature>
<feature type="binding site" description="axial binding residue" evidence="1">
    <location>
        <position position="114"/>
    </location>
    <ligand>
        <name>heme b</name>
        <dbReference type="ChEBI" id="CHEBI:60344"/>
        <label>1; low-spin</label>
    </ligand>
    <ligandPart>
        <name>Fe</name>
        <dbReference type="ChEBI" id="CHEBI:18248"/>
    </ligandPart>
</feature>
<feature type="binding site" evidence="1">
    <location>
        <position position="264"/>
    </location>
    <ligand>
        <name>Cu cation</name>
        <dbReference type="ChEBI" id="CHEBI:23378"/>
        <label>B</label>
    </ligand>
</feature>
<feature type="binding site" evidence="1">
    <location>
        <position position="314"/>
    </location>
    <ligand>
        <name>Cu cation</name>
        <dbReference type="ChEBI" id="CHEBI:23378"/>
        <label>B</label>
    </ligand>
</feature>
<feature type="binding site" evidence="1">
    <location>
        <position position="315"/>
    </location>
    <ligand>
        <name>Cu cation</name>
        <dbReference type="ChEBI" id="CHEBI:23378"/>
        <label>B</label>
    </ligand>
</feature>
<feature type="binding site" description="axial binding residue" evidence="1">
    <location>
        <position position="402"/>
    </location>
    <ligand>
        <name>heme b</name>
        <dbReference type="ChEBI" id="CHEBI:60344"/>
        <label>2; high-spin</label>
    </ligand>
    <ligandPart>
        <name>Fe</name>
        <dbReference type="ChEBI" id="CHEBI:18248"/>
    </ligandPart>
</feature>
<feature type="binding site" description="axial binding residue" evidence="1">
    <location>
        <position position="404"/>
    </location>
    <ligand>
        <name>heme b</name>
        <dbReference type="ChEBI" id="CHEBI:60344"/>
        <label>1; low-spin</label>
    </ligand>
    <ligandPart>
        <name>Fe</name>
        <dbReference type="ChEBI" id="CHEBI:18248"/>
    </ligandPart>
</feature>
<sequence>MWDYVKLVALGVVAAIAAYAASQARDLPYMVNMVEVALAAVIALIWVLRTMGDPKPSKDEYFDGVIRAGVIATTFWGIVGFLVAVVIAFQLAFPALNLEFGNGMLNFGRLRPLHTSAVIFAFGGNALIASAFYVVQRTSAARLFGGTALGWFVFWGWQLIIVTAATSYLLGGSQGKEYAELNWHLDILVAVVWVAYLIAFLGTIFKRKEPHIYVANWFYLSFIVTIAMLHIVNNLAVPVSIFGTKSVQLMAGVQDAMTQWWYGHNAVGFFLTAGFLGMMYYFVPKQAERPVYSYKLSIVHFWALIFLYIWAGPHHLHYTALPDWASTLGMVMSVILWMPSWGGMINGLMTLSGAWDKLRTDPVIRMMVVSIGFYGMSTFEGPMMSIKAVNSLSHYTDWTIGHVHSGALGWNGMITFGMLYFLTPRLWGRSGLYSLKLVSWHFWLATIGIVLYASAMWVTGIMEGLMWREVDAQGFLVNAFADTVAAKFPMYVVRGVGGVLYLLGGLIMAYNLWATVAKQPKTANLAVAVPAE</sequence>
<accession>P98059</accession>
<proteinExistence type="inferred from homology"/>
<organism>
    <name type="scientific">Rhodobacter capsulatus</name>
    <name type="common">Rhodopseudomonas capsulata</name>
    <dbReference type="NCBI Taxonomy" id="1061"/>
    <lineage>
        <taxon>Bacteria</taxon>
        <taxon>Pseudomonadati</taxon>
        <taxon>Pseudomonadota</taxon>
        <taxon>Alphaproteobacteria</taxon>
        <taxon>Rhodobacterales</taxon>
        <taxon>Rhodobacter group</taxon>
        <taxon>Rhodobacter</taxon>
    </lineage>
</organism>
<reference key="1">
    <citation type="journal article" date="1994" name="Mol. Microbiol.">
        <title>The ccoNOQP gene cluster codes for a cb-type cytochrome oxidase that functions in aerobic respiration of Rhodobacter capsulatus.</title>
        <authorList>
            <person name="Thony-Meyer L."/>
            <person name="Beck C."/>
            <person name="Preisig O."/>
            <person name="Hennecke H."/>
        </authorList>
    </citation>
    <scope>NUCLEOTIDE SEQUENCE [GENOMIC DNA]</scope>
    <source>
        <strain>DSM 938 / 37b4</strain>
    </source>
</reference>
<comment type="function">
    <text>Cytochrome c oxidase is the component of the respiratory chain that catalyzes the reduction of oxygen to water. Subunits 1-3 form the functional core of the enzyme complex. Co I is the catalytic subunit of the enzyme. Electrons originating in cytochrome c are transferred via the copper A center of subunit 2 and heme a of subunit 1 to the bimetallic center formed by heme a3 and copper B. This cytochrome c oxidase shows proton pump activity across the membrane in addition to the electron transfer.</text>
</comment>
<comment type="catalytic activity">
    <reaction>
        <text>4 Fe(II)-[cytochrome c] + O2 + 8 H(+)(in) = 4 Fe(III)-[cytochrome c] + 2 H2O + 4 H(+)(out)</text>
        <dbReference type="Rhea" id="RHEA:11436"/>
        <dbReference type="Rhea" id="RHEA-COMP:10350"/>
        <dbReference type="Rhea" id="RHEA-COMP:14399"/>
        <dbReference type="ChEBI" id="CHEBI:15377"/>
        <dbReference type="ChEBI" id="CHEBI:15378"/>
        <dbReference type="ChEBI" id="CHEBI:15379"/>
        <dbReference type="ChEBI" id="CHEBI:29033"/>
        <dbReference type="ChEBI" id="CHEBI:29034"/>
        <dbReference type="EC" id="7.1.1.9"/>
    </reaction>
</comment>
<comment type="cofactor">
    <cofactor evidence="1">
        <name>Cu(2+)</name>
        <dbReference type="ChEBI" id="CHEBI:29036"/>
    </cofactor>
    <text evidence="1">Binds 1 copper ion per subunit, denoted as copper B.</text>
</comment>
<comment type="cofactor">
    <cofactor evidence="1">
        <name>heme b</name>
        <dbReference type="ChEBI" id="CHEBI:60344"/>
    </cofactor>
    <text evidence="1">Binds 2 heme b groups per subunit, denoted as high- and low-spin.</text>
</comment>
<comment type="pathway">
    <text>Energy metabolism; oxidative phosphorylation.</text>
</comment>
<comment type="subcellular location">
    <subcellularLocation>
        <location>Cell membrane</location>
        <topology>Multi-pass membrane protein</topology>
    </subcellularLocation>
</comment>
<comment type="similarity">
    <text evidence="3">Belongs to the heme-copper respiratory oxidase family.</text>
</comment>
<name>COX1_RHOCA</name>